<accession>Q5U7L7</accession>
<keyword id="KW-0002">3D-structure</keyword>
<keyword id="KW-0046">Antibiotic resistance</keyword>
<keyword id="KW-0378">Hydrolase</keyword>
<keyword id="KW-0479">Metal-binding</keyword>
<keyword id="KW-0574">Periplasm</keyword>
<keyword id="KW-0732">Signal</keyword>
<keyword id="KW-0862">Zinc</keyword>
<name>BLBV2_ECOLX</name>
<proteinExistence type="evidence at protein level"/>
<sequence>MFKLLSKLLVYLTASIMAIASPLAFSVDSSGEYPTVSEIPVGEVRLYQIADGVWSHIATQSFDGAVYPSNGLIVRDGDELLLIDTAWGAKNTAALLAEIEKQIGLPVTRAVSTHFHDDRVGGVDVLRAAGVATYASPSTRRLAEVEGNEIPTHSLEGLSSSGDAVRFGPVELFYPGAAHSTDNLVVYVPSASVLYGGCAIYELSRTSAGNVADADLAEWPTSIERIQQHYPEAQFVIPGHGLPGGLDLLKHTTNVVKAHTNRSVVE</sequence>
<comment type="function">
    <text evidence="4 5 6">Class B beta-lactamase which confers resistance to the beta-lactam antibiotics, including penicillins, cephalosporins and carbapenems (PubMed:20498317, PubMed:31744917). Acts via hydrolysis of the beta-lactam ring (PubMed:20498317, PubMed:24965651). Has penicillin-, cephalosporin- and carbapenem-hydrolyzing activities (PubMed:20498317, PubMed:24965651).</text>
</comment>
<comment type="catalytic activity">
    <reaction evidence="4 5 6">
        <text>a beta-lactam + H2O = a substituted beta-amino acid</text>
        <dbReference type="Rhea" id="RHEA:20401"/>
        <dbReference type="ChEBI" id="CHEBI:15377"/>
        <dbReference type="ChEBI" id="CHEBI:35627"/>
        <dbReference type="ChEBI" id="CHEBI:140347"/>
        <dbReference type="EC" id="3.5.2.6"/>
    </reaction>
</comment>
<comment type="cofactor">
    <cofactor evidence="5 6 12">
        <name>Zn(2+)</name>
        <dbReference type="ChEBI" id="CHEBI:29105"/>
    </cofactor>
</comment>
<comment type="activity regulation">
    <text evidence="5 6 7">Inhibited by chelating agents such as EDTA (PubMed:31744917). Inhibited by a fungal natural product, aspergillomarasmine A (AMA) (PubMed:24965651). Inhibited by 2-triazolylthioacetamides (PubMed:31906402).</text>
</comment>
<comment type="biophysicochemical properties">
    <kinetics>
        <KM evidence="4">90 uM for ampicillin (at pH 7.0 and 30 degrees Celsius)</KM>
        <KM evidence="4">11 uM for cefalotin (at pH 7.0 and 30 degrees Celsius)</KM>
        <KM evidence="4">20 uM for cefuroxime (at pH 7.0 and 30 degrees Celsius)</KM>
        <KM evidence="4">13 uM for cefoxitin (at pH 7.0 and 30 degrees Celsius)</KM>
        <KM evidence="4">72 uM for ceftazidime (at pH 7.0 and 30 degrees Celsius)</KM>
        <KM evidence="4">12 uM for cefotaxime (at pH 7.0 and 30 degrees Celsius)</KM>
        <KM evidence="4">400 uM for cefepime (at pH 7.0 and 30 degrees Celsius)</KM>
        <KM evidence="4">18 uM for nitrocefin (at pH 7.0 and 30 degrees Celsius)</KM>
        <KM evidence="4">9 uM for imipenem (at pH 7.0 and 30 degrees Celsius)</KM>
        <KM evidence="4">2 uM for meropenem (at pH 7.0 and 30 degrees Celsius)</KM>
        <text evidence="4">kcat is 125 sec(-1) with ampicillin as substrate (at pH 7.0 and 30 degrees Celsius) (PubMed:20498317). kcat is 130 sec(-1) with cefalotin as substrate (at pH 7.0 and 30 degrees Celsius) (PubMed:20498317). kcat is 770 sec(-1) with nitrocefin as substrate (at pH 7.0 and 30 degrees Celsius) (PubMed:20498317). kcat is 8 sec(-1) with cefuroxime as substrate (at pH 7.0 and 30 degrees Celsius) (PubMed:20498317). kcat is 15 sec(-1) with cefoxitin as substrate (at pH 7.0 and 30 degrees Celsius) (PubMed:20498317). kcat is 3.6 sec(-1) with ceftazidime as substrate (at pH 7.0 and 30 degrees Celsius) (PubMed:20498317). kcat is 70 sec(-1) with cefotaxime as substrate (at pH 7.0 and 30 degrees Celsius) (PubMed:20498317). kcat is 40 sec(-1) with cefepime as substrate (at pH 7.0 and 30 degrees Celsius) (PubMed:20498317). kcat is 5 sec(-1) with meropenem as substrate (at pH 7.0 and 30 degrees Celsius) (PubMed:20498317). kcat is 34 sec(-1) with imipenem as substrate (at pH 7.0 and 30 degrees Celsius) (PubMed:20498317).</text>
    </kinetics>
</comment>
<comment type="subunit">
    <text evidence="1">Monomer.</text>
</comment>
<comment type="subcellular location">
    <subcellularLocation>
        <location evidence="6">Periplasm</location>
    </subcellularLocation>
</comment>
<comment type="miscellaneous">
    <text evidence="3">The class B beta-lactamase family has a specific amino-acid numbering system known as BBL, for standard numbering of class B beta-lactamases. A multiple sequence alignment was used to derive a consensus sequence and then the consensus was numbered taking into account insertions and deletions. This allows use of identical numbers, e.g. for active site residues, despite differences in protein length. UniProt always uses natural numbering of residues, hence there appear to be differences in numbering between this entry and some papers.</text>
</comment>
<comment type="similarity">
    <text evidence="11">Belongs to the metallo-beta-lactamase superfamily. Class-B beta-lactamase family.</text>
</comment>
<gene>
    <name evidence="8" type="primary">VIM-2</name>
    <name evidence="13" type="synonym">blaVIM-2</name>
    <name evidence="9" type="synonym">VIM2</name>
</gene>
<feature type="signal peptide" evidence="2">
    <location>
        <begin position="1"/>
        <end position="20"/>
    </location>
</feature>
<feature type="chain" id="PRO_5004262738" description="Metallo-beta-lactamase VIM-2" evidence="2">
    <location>
        <begin position="21"/>
        <end position="266"/>
    </location>
</feature>
<feature type="binding site" evidence="14">
    <location>
        <position position="114"/>
    </location>
    <ligand>
        <name>Zn(2+)</name>
        <dbReference type="ChEBI" id="CHEBI:29105"/>
        <label>1</label>
    </ligand>
</feature>
<feature type="binding site" evidence="14">
    <location>
        <position position="116"/>
    </location>
    <ligand>
        <name>Zn(2+)</name>
        <dbReference type="ChEBI" id="CHEBI:29105"/>
        <label>1</label>
    </ligand>
</feature>
<feature type="binding site" evidence="14">
    <location>
        <position position="198"/>
    </location>
    <ligand>
        <name>Zn(2+)</name>
        <dbReference type="ChEBI" id="CHEBI:29105"/>
        <label>2</label>
    </ligand>
</feature>
<feature type="mutagenesis site" description="Modest decrease in catalytic efficiency about 8-fold, with respect to ampicillin, and increase in catalytic efficiency about 9-fold, with respect to cefuroxime. Does not alter catalytic efficiency with respect to various other cephalosporins and carbapenems. Does not alter resistance to penicillins, nor various cephalosporins and carbapenems, in E.coli XL1-Blue strain." evidence="4">
    <original>A</original>
    <variation>W</variation>
    <location>
        <position position="65"/>
    </location>
</feature>
<feature type="mutagenesis site" description="Reduces resistance to penicillins about 8-fold, to various cephalosporins between 8- and 250-fold, and to carbapenems about 8-fold, in E.coli XL1-Blue strain. Reduces thermal stability. May also impair protein folding and rate of production in E.coli XL1-Blue strain." evidence="4">
    <original>W</original>
    <variation>A</variation>
    <variation>F</variation>
    <location>
        <position position="87"/>
    </location>
</feature>
<feature type="mutagenesis site" description="Reductions in catalytic efficiency, about 8-fold with respect to cefepime, about 20-fold with respect to cefotaxime and about 100-fold with respect to ceftazidime. Does not alter catalytic efficiency with respect to ampicillin, various other cephalosporins and carbapenems." evidence="4">
    <original>W</original>
    <variation>A</variation>
    <location>
        <position position="87"/>
    </location>
</feature>
<feature type="mutagenesis site" description="Does not alter catalytic efficiency with respect to ampicillin, various cephalosporins and carbapenems." evidence="4">
    <original>W</original>
    <variation>F</variation>
    <location>
        <position position="87"/>
    </location>
</feature>
<feature type="helix" evidence="15">
    <location>
        <begin position="36"/>
        <end position="38"/>
    </location>
</feature>
<feature type="strand" evidence="15">
    <location>
        <begin position="44"/>
        <end position="50"/>
    </location>
</feature>
<feature type="strand" evidence="15">
    <location>
        <begin position="53"/>
        <end position="58"/>
    </location>
</feature>
<feature type="strand" evidence="15">
    <location>
        <begin position="70"/>
        <end position="76"/>
    </location>
</feature>
<feature type="strand" evidence="15">
    <location>
        <begin position="79"/>
        <end position="84"/>
    </location>
</feature>
<feature type="helix" evidence="15">
    <location>
        <begin position="89"/>
        <end position="102"/>
    </location>
</feature>
<feature type="strand" evidence="15">
    <location>
        <begin position="107"/>
        <end position="111"/>
    </location>
</feature>
<feature type="helix" evidence="15">
    <location>
        <begin position="122"/>
        <end position="127"/>
    </location>
</feature>
<feature type="turn" evidence="15">
    <location>
        <begin position="128"/>
        <end position="130"/>
    </location>
</feature>
<feature type="strand" evidence="15">
    <location>
        <begin position="132"/>
        <end position="135"/>
    </location>
</feature>
<feature type="helix" evidence="15">
    <location>
        <begin position="137"/>
        <end position="145"/>
    </location>
</feature>
<feature type="strand" evidence="15">
    <location>
        <begin position="164"/>
        <end position="167"/>
    </location>
</feature>
<feature type="strand" evidence="15">
    <location>
        <begin position="170"/>
        <end position="173"/>
    </location>
</feature>
<feature type="strand" evidence="15">
    <location>
        <begin position="177"/>
        <end position="180"/>
    </location>
</feature>
<feature type="strand" evidence="15">
    <location>
        <begin position="185"/>
        <end position="188"/>
    </location>
</feature>
<feature type="turn" evidence="15">
    <location>
        <begin position="189"/>
        <end position="192"/>
    </location>
</feature>
<feature type="strand" evidence="15">
    <location>
        <begin position="193"/>
        <end position="197"/>
    </location>
</feature>
<feature type="turn" evidence="15">
    <location>
        <begin position="216"/>
        <end position="218"/>
    </location>
</feature>
<feature type="helix" evidence="15">
    <location>
        <begin position="219"/>
        <end position="229"/>
    </location>
</feature>
<feature type="strand" evidence="15">
    <location>
        <begin position="235"/>
        <end position="241"/>
    </location>
</feature>
<feature type="helix" evidence="15">
    <location>
        <begin position="247"/>
        <end position="258"/>
    </location>
</feature>
<evidence type="ECO:0000250" key="1">
    <source>
        <dbReference type="UniProtKB" id="P25910"/>
    </source>
</evidence>
<evidence type="ECO:0000255" key="2"/>
<evidence type="ECO:0000269" key="3">
    <source>
    </source>
</evidence>
<evidence type="ECO:0000269" key="4">
    <source>
    </source>
</evidence>
<evidence type="ECO:0000269" key="5">
    <source>
    </source>
</evidence>
<evidence type="ECO:0000269" key="6">
    <source>
    </source>
</evidence>
<evidence type="ECO:0000269" key="7">
    <source>
    </source>
</evidence>
<evidence type="ECO:0000303" key="8">
    <source>
    </source>
</evidence>
<evidence type="ECO:0000303" key="9">
    <source>
    </source>
</evidence>
<evidence type="ECO:0000303" key="10">
    <source>
    </source>
</evidence>
<evidence type="ECO:0000305" key="11"/>
<evidence type="ECO:0000305" key="12">
    <source>
    </source>
</evidence>
<evidence type="ECO:0000312" key="13">
    <source>
        <dbReference type="EMBL" id="AAV48840.1"/>
    </source>
</evidence>
<evidence type="ECO:0007744" key="14">
    <source>
        <dbReference type="PDB" id="6BM9"/>
    </source>
</evidence>
<evidence type="ECO:0007829" key="15">
    <source>
        <dbReference type="PDB" id="6BM9"/>
    </source>
</evidence>
<organism evidence="13">
    <name type="scientific">Escherichia coli</name>
    <dbReference type="NCBI Taxonomy" id="562"/>
    <lineage>
        <taxon>Bacteria</taxon>
        <taxon>Pseudomonadati</taxon>
        <taxon>Pseudomonadota</taxon>
        <taxon>Gammaproteobacteria</taxon>
        <taxon>Enterobacterales</taxon>
        <taxon>Enterobacteriaceae</taxon>
        <taxon>Escherichia</taxon>
    </lineage>
</organism>
<protein>
    <recommendedName>
        <fullName evidence="8">Metallo-beta-lactamase VIM-2</fullName>
        <ecNumber evidence="4 5 6">3.5.2.6</ecNumber>
    </recommendedName>
    <alternativeName>
        <fullName evidence="9">Verona imipenemase 2</fullName>
    </alternativeName>
    <alternativeName>
        <fullName evidence="10">Verona integron-encoded metallo-beta-lactamase 2</fullName>
    </alternativeName>
</protein>
<dbReference type="EC" id="3.5.2.6" evidence="4 5 6"/>
<dbReference type="EMBL" id="AY781413">
    <property type="protein sequence ID" value="AAV48840.1"/>
    <property type="molecule type" value="Genomic_DNA"/>
</dbReference>
<dbReference type="PDB" id="6BM9">
    <property type="method" value="X-ray"/>
    <property type="resolution" value="2.19 A"/>
    <property type="chains" value="A/B/C/D=27-266"/>
</dbReference>
<dbReference type="PDBsum" id="6BM9"/>
<dbReference type="SMR" id="Q5U7L7"/>
<dbReference type="ChEMBL" id="CHEMBL1255147"/>
<dbReference type="CARD" id="ARO:3002272">
    <property type="molecule name" value="VIM-2"/>
    <property type="mechanism identifier" value="ARO:0001004"/>
    <property type="mechanism name" value="antibiotic inactivation"/>
</dbReference>
<dbReference type="GO" id="GO:0042597">
    <property type="term" value="C:periplasmic space"/>
    <property type="evidence" value="ECO:0007669"/>
    <property type="project" value="UniProtKB-SubCell"/>
</dbReference>
<dbReference type="GO" id="GO:0016787">
    <property type="term" value="F:hydrolase activity"/>
    <property type="evidence" value="ECO:0007669"/>
    <property type="project" value="UniProtKB-KW"/>
</dbReference>
<dbReference type="GO" id="GO:0046872">
    <property type="term" value="F:metal ion binding"/>
    <property type="evidence" value="ECO:0007669"/>
    <property type="project" value="UniProtKB-KW"/>
</dbReference>
<dbReference type="GO" id="GO:0046677">
    <property type="term" value="P:response to antibiotic"/>
    <property type="evidence" value="ECO:0007669"/>
    <property type="project" value="UniProtKB-KW"/>
</dbReference>
<dbReference type="CDD" id="cd16303">
    <property type="entry name" value="VIM_type_MBL-B1"/>
    <property type="match status" value="1"/>
</dbReference>
<dbReference type="FunFam" id="3.60.15.10:FF:000020">
    <property type="entry name" value="Class B metallo-beta-lactamase"/>
    <property type="match status" value="1"/>
</dbReference>
<dbReference type="Gene3D" id="3.60.15.10">
    <property type="entry name" value="Ribonuclease Z/Hydroxyacylglutathione hydrolase-like"/>
    <property type="match status" value="1"/>
</dbReference>
<dbReference type="InterPro" id="IPR001279">
    <property type="entry name" value="Metallo-B-lactamas"/>
</dbReference>
<dbReference type="InterPro" id="IPR050855">
    <property type="entry name" value="NDM-1-like"/>
</dbReference>
<dbReference type="InterPro" id="IPR036866">
    <property type="entry name" value="RibonucZ/Hydroxyglut_hydro"/>
</dbReference>
<dbReference type="InterPro" id="IPR049721">
    <property type="entry name" value="VIM-type_MBL"/>
</dbReference>
<dbReference type="NCBIfam" id="NF012229">
    <property type="entry name" value="bla_class_B_core"/>
    <property type="match status" value="1"/>
</dbReference>
<dbReference type="NCBIfam" id="NF033088">
    <property type="entry name" value="bla_subclass_B1"/>
    <property type="match status" value="1"/>
</dbReference>
<dbReference type="NCBIfam" id="NF012100">
    <property type="entry name" value="blaVIM"/>
    <property type="match status" value="1"/>
</dbReference>
<dbReference type="PANTHER" id="PTHR42951:SF4">
    <property type="entry name" value="ACYL-COENZYME A THIOESTERASE MBLAC2"/>
    <property type="match status" value="1"/>
</dbReference>
<dbReference type="PANTHER" id="PTHR42951">
    <property type="entry name" value="METALLO-BETA-LACTAMASE DOMAIN-CONTAINING"/>
    <property type="match status" value="1"/>
</dbReference>
<dbReference type="Pfam" id="PF00753">
    <property type="entry name" value="Lactamase_B"/>
    <property type="match status" value="1"/>
</dbReference>
<dbReference type="SMART" id="SM00849">
    <property type="entry name" value="Lactamase_B"/>
    <property type="match status" value="1"/>
</dbReference>
<dbReference type="SUPFAM" id="SSF56281">
    <property type="entry name" value="Metallo-hydrolase/oxidoreductase"/>
    <property type="match status" value="1"/>
</dbReference>
<reference evidence="13" key="1">
    <citation type="journal article" date="2004" name="Clin. Microbiol. Infect.">
        <title>First identification of an Escherichia coli clinical isolate producing both metallo-beta-lactamase VIM-2 and extended-spectrum beta-lactamase IBC-1.</title>
        <authorList>
            <person name="Galani I."/>
            <person name="Souli M."/>
            <person name="Chryssouli Z."/>
            <person name="Katsala D."/>
            <person name="Giamarellou H."/>
        </authorList>
    </citation>
    <scope>NUCLEOTIDE SEQUENCE [GENOMIC DNA]</scope>
</reference>
<reference evidence="11" key="2">
    <citation type="journal article" date="2010" name="Antimicrob. Agents Chemother.">
        <title>Mutational analysis of VIM-2 reveals an essential determinant for metallo-beta-lactamase stability and folding.</title>
        <authorList>
            <person name="Borgianni L."/>
            <person name="Vandenameele J."/>
            <person name="Matagne A."/>
            <person name="Bini L."/>
            <person name="Bonomo R.A."/>
            <person name="Frere J.M."/>
            <person name="Rossolini G.M."/>
            <person name="Docquier J.D."/>
        </authorList>
    </citation>
    <scope>FUNCTION</scope>
    <scope>CATALYTIC ACTIVITY</scope>
    <scope>COFACTOR</scope>
    <scope>BIOPHYSICOCHEMICAL PROPERTIES</scope>
    <scope>MUTAGENESIS OF ALA-65 AND TRP-87</scope>
</reference>
<reference evidence="11" key="3">
    <citation type="journal article" date="2001" name="Antimicrob. Agents Chemother.">
        <title>Standard numbering scheme for class B beta-lactamases.</title>
        <authorList>
            <consortium name="Metallo-beta-lactamases Working Group"/>
            <person name="Galleni M."/>
            <person name="Lamotte-Brasseur J."/>
            <person name="Rossolini G.M."/>
            <person name="Spencer J."/>
            <person name="Dideberg O."/>
            <person name="Frere J.M."/>
        </authorList>
    </citation>
    <scope>AMINO ACID NUMBERING SCHEME</scope>
</reference>
<reference evidence="11" key="4">
    <citation type="journal article" date="2014" name="Nature">
        <title>Aspergillomarasmine A overcomes metallo-beta-lactamase antibiotic resistance.</title>
        <authorList>
            <person name="King A.M."/>
            <person name="Reid-Yu S.A."/>
            <person name="Wang W."/>
            <person name="King D.T."/>
            <person name="De Pascale G."/>
            <person name="Strynadka N.C."/>
            <person name="Walsh T.R."/>
            <person name="Coombes B.K."/>
            <person name="Wright G.D."/>
        </authorList>
    </citation>
    <scope>FUNCTION</scope>
    <scope>CATALYTIC ACTIVITY</scope>
    <scope>ACTIVITY REGULATION</scope>
    <scope>COFACTOR</scope>
</reference>
<reference evidence="11" key="5">
    <citation type="journal article" date="2019" name="MBio">
        <title>A Single Salt Bridge in VIM-20 Increases Protein Stability and Antibiotic Resistance under Low-Zinc Conditions.</title>
        <authorList>
            <person name="Cheng Z."/>
            <person name="Shurina B.A."/>
            <person name="Bethel C.R."/>
            <person name="Thomas P.W."/>
            <person name="Marshall S.H."/>
            <person name="Thomas C.A."/>
            <person name="Yang K."/>
            <person name="Kimble R.L."/>
            <person name="Montgomery J.S."/>
            <person name="Orischak M.G."/>
            <person name="Miller C.M."/>
            <person name="Tennenbaum J.L."/>
            <person name="Nix J.C."/>
            <person name="Tierney D.L."/>
            <person name="Fast W."/>
            <person name="Bonomo R.A."/>
            <person name="Page R.C."/>
            <person name="Crowder M.W."/>
        </authorList>
    </citation>
    <scope>FUNCTION</scope>
    <scope>CATALYTIC ACTIVITY</scope>
    <scope>ACTIVITY REGULATION</scope>
    <scope>COFACTOR</scope>
    <scope>SUBCELLULAR LOCATION</scope>
</reference>
<reference key="6">
    <citation type="journal article" date="2020" name="Biomolecules">
        <title>Kinetic, Thermodynamic, and Crystallographic Studies of 2-Triazolylthioacetamides as Verona Integron-Encoded Metallo-beta-Lactamase 2 (VIM-2) Inhibitor.</title>
        <authorList>
            <person name="Xiang Y."/>
            <person name="Zhang Y.J."/>
            <person name="Ge Y."/>
            <person name="Zhou Y."/>
            <person name="Chen C."/>
            <person name="Wahlgren W.Y."/>
            <person name="Tan X."/>
            <person name="Chen X."/>
            <person name="Yang K.W."/>
        </authorList>
    </citation>
    <scope>ACTIVITY REGULATION</scope>
</reference>
<reference evidence="14" key="7">
    <citation type="journal article" date="2019" name="Elife">
        <title>Cryptic genetic variation shapes the adaptive evolutionary potential of enzymes.</title>
        <authorList>
            <person name="Baier F."/>
            <person name="Hong N."/>
            <person name="Yang G."/>
            <person name="Pabis A."/>
            <person name="Miton C.M."/>
            <person name="Barrozo A."/>
            <person name="Carr P.D."/>
            <person name="Kamerlin S.C."/>
            <person name="Jackson C.J."/>
            <person name="Tokuriki N."/>
        </authorList>
    </citation>
    <scope>X-RAY CRYSTALLOGRAPHY (2.19 ANGSTROMS) OF 27-266 IN COMPLEX WITH ZN(2+)</scope>
</reference>